<accession>A4XKA5</accession>
<keyword id="KW-0143">Chaperone</keyword>
<keyword id="KW-0963">Cytoplasm</keyword>
<keyword id="KW-0235">DNA replication</keyword>
<keyword id="KW-0479">Metal-binding</keyword>
<keyword id="KW-0677">Repeat</keyword>
<keyword id="KW-0346">Stress response</keyword>
<keyword id="KW-0862">Zinc</keyword>
<keyword id="KW-0863">Zinc-finger</keyword>
<feature type="chain" id="PRO_1000085167" description="Chaperone protein DnaJ">
    <location>
        <begin position="1"/>
        <end position="387"/>
    </location>
</feature>
<feature type="domain" description="J" evidence="1">
    <location>
        <begin position="6"/>
        <end position="71"/>
    </location>
</feature>
<feature type="repeat" description="CXXCXGXG motif">
    <location>
        <begin position="159"/>
        <end position="166"/>
    </location>
</feature>
<feature type="repeat" description="CXXCXGXG motif">
    <location>
        <begin position="176"/>
        <end position="183"/>
    </location>
</feature>
<feature type="repeat" description="CXXCXGXG motif">
    <location>
        <begin position="202"/>
        <end position="209"/>
    </location>
</feature>
<feature type="repeat" description="CXXCXGXG motif">
    <location>
        <begin position="216"/>
        <end position="223"/>
    </location>
</feature>
<feature type="zinc finger region" description="CR-type" evidence="1">
    <location>
        <begin position="146"/>
        <end position="228"/>
    </location>
</feature>
<feature type="binding site" evidence="1">
    <location>
        <position position="159"/>
    </location>
    <ligand>
        <name>Zn(2+)</name>
        <dbReference type="ChEBI" id="CHEBI:29105"/>
        <label>1</label>
    </ligand>
</feature>
<feature type="binding site" evidence="1">
    <location>
        <position position="162"/>
    </location>
    <ligand>
        <name>Zn(2+)</name>
        <dbReference type="ChEBI" id="CHEBI:29105"/>
        <label>1</label>
    </ligand>
</feature>
<feature type="binding site" evidence="1">
    <location>
        <position position="176"/>
    </location>
    <ligand>
        <name>Zn(2+)</name>
        <dbReference type="ChEBI" id="CHEBI:29105"/>
        <label>2</label>
    </ligand>
</feature>
<feature type="binding site" evidence="1">
    <location>
        <position position="179"/>
    </location>
    <ligand>
        <name>Zn(2+)</name>
        <dbReference type="ChEBI" id="CHEBI:29105"/>
        <label>2</label>
    </ligand>
</feature>
<feature type="binding site" evidence="1">
    <location>
        <position position="202"/>
    </location>
    <ligand>
        <name>Zn(2+)</name>
        <dbReference type="ChEBI" id="CHEBI:29105"/>
        <label>2</label>
    </ligand>
</feature>
<feature type="binding site" evidence="1">
    <location>
        <position position="205"/>
    </location>
    <ligand>
        <name>Zn(2+)</name>
        <dbReference type="ChEBI" id="CHEBI:29105"/>
        <label>2</label>
    </ligand>
</feature>
<feature type="binding site" evidence="1">
    <location>
        <position position="216"/>
    </location>
    <ligand>
        <name>Zn(2+)</name>
        <dbReference type="ChEBI" id="CHEBI:29105"/>
        <label>1</label>
    </ligand>
</feature>
<feature type="binding site" evidence="1">
    <location>
        <position position="219"/>
    </location>
    <ligand>
        <name>Zn(2+)</name>
        <dbReference type="ChEBI" id="CHEBI:29105"/>
        <label>1</label>
    </ligand>
</feature>
<evidence type="ECO:0000255" key="1">
    <source>
        <dbReference type="HAMAP-Rule" id="MF_01152"/>
    </source>
</evidence>
<comment type="function">
    <text evidence="1">Participates actively in the response to hyperosmotic and heat shock by preventing the aggregation of stress-denatured proteins and by disaggregating proteins, also in an autonomous, DnaK-independent fashion. Unfolded proteins bind initially to DnaJ; upon interaction with the DnaJ-bound protein, DnaK hydrolyzes its bound ATP, resulting in the formation of a stable complex. GrpE releases ADP from DnaK; ATP binding to DnaK triggers the release of the substrate protein, thus completing the reaction cycle. Several rounds of ATP-dependent interactions between DnaJ, DnaK and GrpE are required for fully efficient folding. Also involved, together with DnaK and GrpE, in the DNA replication of plasmids through activation of initiation proteins.</text>
</comment>
<comment type="cofactor">
    <cofactor evidence="1">
        <name>Zn(2+)</name>
        <dbReference type="ChEBI" id="CHEBI:29105"/>
    </cofactor>
    <text evidence="1">Binds 2 Zn(2+) ions per monomer.</text>
</comment>
<comment type="subunit">
    <text evidence="1">Homodimer.</text>
</comment>
<comment type="subcellular location">
    <subcellularLocation>
        <location evidence="1">Cytoplasm</location>
    </subcellularLocation>
</comment>
<comment type="domain">
    <text evidence="1">The J domain is necessary and sufficient to stimulate DnaK ATPase activity. Zinc center 1 plays an important role in the autonomous, DnaK-independent chaperone activity of DnaJ. Zinc center 2 is essential for interaction with DnaK and for DnaJ activity.</text>
</comment>
<comment type="similarity">
    <text evidence="1">Belongs to the DnaJ family.</text>
</comment>
<name>DNAJ_CALS8</name>
<protein>
    <recommendedName>
        <fullName evidence="1">Chaperone protein DnaJ</fullName>
    </recommendedName>
</protein>
<gene>
    <name evidence="1" type="primary">dnaJ</name>
    <name type="ordered locus">Csac_1753</name>
</gene>
<sequence length="387" mass="42878">MAQKKDYYEILGVPRNATQEEIKRAYRRLAKQYHPDANPGNKEAEEKFKEINEAYEVLSDPEKRRKYDQFGHAAFDPTYGAQGGGFSGGFTGGFADFDFGSFGDIFEDLFEGFDIFGSSRRRKEAPRKGADIQVDLELTLKESVFGCEKEIPIYRTEKCSVCGGSGVRPGATPVRCQKCGGTGQIRSRQATFFGEFTTIKTCDACGGVGTIITDPCRECGGTGTVRRQRRVKINIPAGIDDGQVITLGGEGESGIKGGPNGDLHIRIKIAPHPVFKRVGQDLYVEVPITFVNAALGGEIEIPTLDGKTKIRVEPGTQNGDEVRIKGKGVPYLRGRGRGDLVVKFVIEVPKKLSEKQKELLRKFEELSSEEGYEKRKHFWDRIREAFS</sequence>
<organism>
    <name type="scientific">Caldicellulosiruptor saccharolyticus (strain ATCC 43494 / DSM 8903 / Tp8T 6331)</name>
    <dbReference type="NCBI Taxonomy" id="351627"/>
    <lineage>
        <taxon>Bacteria</taxon>
        <taxon>Bacillati</taxon>
        <taxon>Bacillota</taxon>
        <taxon>Bacillota incertae sedis</taxon>
        <taxon>Caldicellulosiruptorales</taxon>
        <taxon>Caldicellulosiruptoraceae</taxon>
        <taxon>Caldicellulosiruptor</taxon>
    </lineage>
</organism>
<dbReference type="EMBL" id="CP000679">
    <property type="protein sequence ID" value="ABP67340.1"/>
    <property type="molecule type" value="Genomic_DNA"/>
</dbReference>
<dbReference type="RefSeq" id="WP_011917274.1">
    <property type="nucleotide sequence ID" value="NC_009437.1"/>
</dbReference>
<dbReference type="SMR" id="A4XKA5"/>
<dbReference type="STRING" id="351627.Csac_1753"/>
<dbReference type="KEGG" id="csc:Csac_1753"/>
<dbReference type="eggNOG" id="COG0484">
    <property type="taxonomic scope" value="Bacteria"/>
</dbReference>
<dbReference type="HOGENOM" id="CLU_017633_0_7_9"/>
<dbReference type="OrthoDB" id="9779889at2"/>
<dbReference type="Proteomes" id="UP000000256">
    <property type="component" value="Chromosome"/>
</dbReference>
<dbReference type="GO" id="GO:0005737">
    <property type="term" value="C:cytoplasm"/>
    <property type="evidence" value="ECO:0007669"/>
    <property type="project" value="UniProtKB-SubCell"/>
</dbReference>
<dbReference type="GO" id="GO:0005524">
    <property type="term" value="F:ATP binding"/>
    <property type="evidence" value="ECO:0007669"/>
    <property type="project" value="InterPro"/>
</dbReference>
<dbReference type="GO" id="GO:0031072">
    <property type="term" value="F:heat shock protein binding"/>
    <property type="evidence" value="ECO:0007669"/>
    <property type="project" value="InterPro"/>
</dbReference>
<dbReference type="GO" id="GO:0051082">
    <property type="term" value="F:unfolded protein binding"/>
    <property type="evidence" value="ECO:0007669"/>
    <property type="project" value="UniProtKB-UniRule"/>
</dbReference>
<dbReference type="GO" id="GO:0008270">
    <property type="term" value="F:zinc ion binding"/>
    <property type="evidence" value="ECO:0007669"/>
    <property type="project" value="UniProtKB-UniRule"/>
</dbReference>
<dbReference type="GO" id="GO:0051085">
    <property type="term" value="P:chaperone cofactor-dependent protein refolding"/>
    <property type="evidence" value="ECO:0007669"/>
    <property type="project" value="TreeGrafter"/>
</dbReference>
<dbReference type="GO" id="GO:0006260">
    <property type="term" value="P:DNA replication"/>
    <property type="evidence" value="ECO:0007669"/>
    <property type="project" value="UniProtKB-KW"/>
</dbReference>
<dbReference type="GO" id="GO:0042026">
    <property type="term" value="P:protein refolding"/>
    <property type="evidence" value="ECO:0007669"/>
    <property type="project" value="TreeGrafter"/>
</dbReference>
<dbReference type="GO" id="GO:0009408">
    <property type="term" value="P:response to heat"/>
    <property type="evidence" value="ECO:0007669"/>
    <property type="project" value="InterPro"/>
</dbReference>
<dbReference type="CDD" id="cd06257">
    <property type="entry name" value="DnaJ"/>
    <property type="match status" value="1"/>
</dbReference>
<dbReference type="CDD" id="cd10747">
    <property type="entry name" value="DnaJ_C"/>
    <property type="match status" value="1"/>
</dbReference>
<dbReference type="CDD" id="cd10719">
    <property type="entry name" value="DnaJ_zf"/>
    <property type="match status" value="1"/>
</dbReference>
<dbReference type="FunFam" id="1.10.287.110:FF:000034">
    <property type="entry name" value="Chaperone protein DnaJ"/>
    <property type="match status" value="1"/>
</dbReference>
<dbReference type="FunFam" id="2.10.230.10:FF:000002">
    <property type="entry name" value="Molecular chaperone DnaJ"/>
    <property type="match status" value="1"/>
</dbReference>
<dbReference type="FunFam" id="2.60.260.20:FF:000004">
    <property type="entry name" value="Molecular chaperone DnaJ"/>
    <property type="match status" value="1"/>
</dbReference>
<dbReference type="Gene3D" id="1.10.287.110">
    <property type="entry name" value="DnaJ domain"/>
    <property type="match status" value="1"/>
</dbReference>
<dbReference type="Gene3D" id="2.10.230.10">
    <property type="entry name" value="Heat shock protein DnaJ, cysteine-rich domain"/>
    <property type="match status" value="1"/>
</dbReference>
<dbReference type="Gene3D" id="2.60.260.20">
    <property type="entry name" value="Urease metallochaperone UreE, N-terminal domain"/>
    <property type="match status" value="2"/>
</dbReference>
<dbReference type="HAMAP" id="MF_01152">
    <property type="entry name" value="DnaJ"/>
    <property type="match status" value="1"/>
</dbReference>
<dbReference type="InterPro" id="IPR012724">
    <property type="entry name" value="DnaJ"/>
</dbReference>
<dbReference type="InterPro" id="IPR002939">
    <property type="entry name" value="DnaJ_C"/>
</dbReference>
<dbReference type="InterPro" id="IPR001623">
    <property type="entry name" value="DnaJ_domain"/>
</dbReference>
<dbReference type="InterPro" id="IPR018253">
    <property type="entry name" value="DnaJ_domain_CS"/>
</dbReference>
<dbReference type="InterPro" id="IPR008971">
    <property type="entry name" value="HSP40/DnaJ_pept-bd"/>
</dbReference>
<dbReference type="InterPro" id="IPR001305">
    <property type="entry name" value="HSP_DnaJ_Cys-rich_dom"/>
</dbReference>
<dbReference type="InterPro" id="IPR036410">
    <property type="entry name" value="HSP_DnaJ_Cys-rich_dom_sf"/>
</dbReference>
<dbReference type="InterPro" id="IPR036869">
    <property type="entry name" value="J_dom_sf"/>
</dbReference>
<dbReference type="NCBIfam" id="TIGR02349">
    <property type="entry name" value="DnaJ_bact"/>
    <property type="match status" value="1"/>
</dbReference>
<dbReference type="NCBIfam" id="NF008035">
    <property type="entry name" value="PRK10767.1"/>
    <property type="match status" value="1"/>
</dbReference>
<dbReference type="NCBIfam" id="NF010870">
    <property type="entry name" value="PRK14277.1"/>
    <property type="match status" value="1"/>
</dbReference>
<dbReference type="PANTHER" id="PTHR43096:SF48">
    <property type="entry name" value="CHAPERONE PROTEIN DNAJ"/>
    <property type="match status" value="1"/>
</dbReference>
<dbReference type="PANTHER" id="PTHR43096">
    <property type="entry name" value="DNAJ HOMOLOG 1, MITOCHONDRIAL-RELATED"/>
    <property type="match status" value="1"/>
</dbReference>
<dbReference type="Pfam" id="PF00226">
    <property type="entry name" value="DnaJ"/>
    <property type="match status" value="1"/>
</dbReference>
<dbReference type="Pfam" id="PF01556">
    <property type="entry name" value="DnaJ_C"/>
    <property type="match status" value="1"/>
</dbReference>
<dbReference type="Pfam" id="PF00684">
    <property type="entry name" value="DnaJ_CXXCXGXG"/>
    <property type="match status" value="1"/>
</dbReference>
<dbReference type="PRINTS" id="PR00625">
    <property type="entry name" value="JDOMAIN"/>
</dbReference>
<dbReference type="SMART" id="SM00271">
    <property type="entry name" value="DnaJ"/>
    <property type="match status" value="1"/>
</dbReference>
<dbReference type="SUPFAM" id="SSF46565">
    <property type="entry name" value="Chaperone J-domain"/>
    <property type="match status" value="1"/>
</dbReference>
<dbReference type="SUPFAM" id="SSF57938">
    <property type="entry name" value="DnaJ/Hsp40 cysteine-rich domain"/>
    <property type="match status" value="1"/>
</dbReference>
<dbReference type="SUPFAM" id="SSF49493">
    <property type="entry name" value="HSP40/DnaJ peptide-binding domain"/>
    <property type="match status" value="2"/>
</dbReference>
<dbReference type="PROSITE" id="PS00636">
    <property type="entry name" value="DNAJ_1"/>
    <property type="match status" value="1"/>
</dbReference>
<dbReference type="PROSITE" id="PS50076">
    <property type="entry name" value="DNAJ_2"/>
    <property type="match status" value="1"/>
</dbReference>
<dbReference type="PROSITE" id="PS51188">
    <property type="entry name" value="ZF_CR"/>
    <property type="match status" value="1"/>
</dbReference>
<reference key="1">
    <citation type="submission" date="2007-04" db="EMBL/GenBank/DDBJ databases">
        <title>Genome sequence of the thermophilic hydrogen-producing bacterium Caldicellulosiruptor saccharolyticus DSM 8903.</title>
        <authorList>
            <person name="Copeland A."/>
            <person name="Lucas S."/>
            <person name="Lapidus A."/>
            <person name="Barry K."/>
            <person name="Detter J.C."/>
            <person name="Glavina del Rio T."/>
            <person name="Hammon N."/>
            <person name="Israni S."/>
            <person name="Dalin E."/>
            <person name="Tice H."/>
            <person name="Pitluck S."/>
            <person name="Kiss H."/>
            <person name="Brettin T."/>
            <person name="Bruce D."/>
            <person name="Han C."/>
            <person name="Schmutz J."/>
            <person name="Larimer F."/>
            <person name="Land M."/>
            <person name="Hauser L."/>
            <person name="Kyrpides N."/>
            <person name="Lykidis A."/>
            <person name="van de Werken H.J.G."/>
            <person name="Verhaart M.R.A."/>
            <person name="VanFossen A.L."/>
            <person name="Lewis D.L."/>
            <person name="Nichols J.D."/>
            <person name="Goorissen H.P."/>
            <person name="van Niel E.W.J."/>
            <person name="Stams F.J.M."/>
            <person name="Willquist K.U."/>
            <person name="Ward D.E."/>
            <person name="van der Oost J."/>
            <person name="Kelly R.M."/>
            <person name="Kengen S.M.W."/>
            <person name="Richardson P."/>
        </authorList>
    </citation>
    <scope>NUCLEOTIDE SEQUENCE [LARGE SCALE GENOMIC DNA]</scope>
    <source>
        <strain>ATCC 43494 / DSM 8903 / Tp8T 6331</strain>
    </source>
</reference>
<proteinExistence type="inferred from homology"/>